<comment type="function">
    <text evidence="1">Part of the outer membrane protein assembly complex, which is involved in assembly and insertion of beta-barrel proteins into the outer membrane. Constitutes, with BamD, the core component of the assembly machinery.</text>
</comment>
<comment type="subunit">
    <text evidence="1">Part of the Bam complex, which is composed of the outer membrane protein BamA, and four lipoproteins BamB, BamC, BamD and BamE.</text>
</comment>
<comment type="subcellular location">
    <subcellularLocation>
        <location evidence="1">Cell outer membrane</location>
    </subcellularLocation>
</comment>
<comment type="similarity">
    <text evidence="1">Belongs to the BamA family.</text>
</comment>
<organism>
    <name type="scientific">Escherichia coli O6:K15:H31 (strain 536 / UPEC)</name>
    <dbReference type="NCBI Taxonomy" id="362663"/>
    <lineage>
        <taxon>Bacteria</taxon>
        <taxon>Pseudomonadati</taxon>
        <taxon>Pseudomonadota</taxon>
        <taxon>Gammaproteobacteria</taxon>
        <taxon>Enterobacterales</taxon>
        <taxon>Enterobacteriaceae</taxon>
        <taxon>Escherichia</taxon>
    </lineage>
</organism>
<gene>
    <name evidence="1" type="primary">bamA</name>
    <name type="synonym">yaeT</name>
    <name type="ordered locus">ECP_0185</name>
</gene>
<feature type="signal peptide" evidence="1">
    <location>
        <begin position="1"/>
        <end position="20"/>
    </location>
</feature>
<feature type="chain" id="PRO_1000024385" description="Outer membrane protein assembly factor BamA">
    <location>
        <begin position="21"/>
        <end position="810"/>
    </location>
</feature>
<feature type="domain" description="POTRA 1" evidence="2">
    <location>
        <begin position="24"/>
        <end position="91"/>
    </location>
</feature>
<feature type="domain" description="POTRA 2" evidence="2">
    <location>
        <begin position="92"/>
        <end position="172"/>
    </location>
</feature>
<feature type="domain" description="POTRA 3" evidence="2">
    <location>
        <begin position="175"/>
        <end position="263"/>
    </location>
</feature>
<feature type="domain" description="POTRA 4" evidence="2">
    <location>
        <begin position="266"/>
        <end position="344"/>
    </location>
</feature>
<feature type="domain" description="POTRA 5" evidence="2">
    <location>
        <begin position="347"/>
        <end position="421"/>
    </location>
</feature>
<evidence type="ECO:0000255" key="1">
    <source>
        <dbReference type="HAMAP-Rule" id="MF_01430"/>
    </source>
</evidence>
<evidence type="ECO:0000255" key="2">
    <source>
        <dbReference type="PROSITE-ProRule" id="PRU01115"/>
    </source>
</evidence>
<sequence>MAMKKLLIASLLFSSATVYGAEGFVVKDIHFEGLQRVAVGAALLSMPVRTGDTVNDEDISNTIRALFATGNFEDVRVLRDGDTLLVQVKERPTIASITFSGNKSVKDDMLKQNLEASGVRVGESLDRTTIADIEKGLEDFYYSVGKYSASVKAVVTPLPRNRVDLKLVFQEGVSAEIQQINIVGNHAFTTDELISHFQLRDEVPWWNVVGDRKYQKQKLAGDLETLRSYYLDRGYARFNIDSTQVSLTPDKKGIYVTVNITEGDQYKLSGVEVSGNLAGHSAEIEQLTKIEPGELYNGTKVTKMEDDIKKLLGRYGYAYPRVQSMPEINDADKTVKLRVNVDAGNRFYVRKIRFEGNDTSKDAVLRREMRQMEGAWLGSDLVDQGKERLNRLGFFETVDTDTQRVPGSPDQVDVVYKVKERNTGSFNFGIGYGTESGVSFQAGVQQDNWLGTGYAVGINGTKNDYQTYAELSVTNPYFTVDGVSLGGRLFYNDFQADDADLSDYTNKSYGTDVTLGFPINEYNSLRAGLGYVHNSLSNMQPQVAMWRYLYSMGEHPSTSDQDNSFKTDDFTFNYGWTYNKLDRGYFPTDGSRVNLTGKVTIPGSDNEYYKVTLDTATYVPIDDDHKWVVLGRTRWGYGDGLGGKEMPFYENFYAGGSSTVRGFQSNTIGPKAVYFPHQASNYDPDYDYECATQDGAKDLCKSDDAVGGNAMAVASLEFITPTPFISDKYANSVRTSFFWDMGTVWDTNWDSSQYSGYPDYSDPSNIRMSAGIALQWMSPLGPLVFSYAQPFKKYDGDKAEQFQFNIGKTW</sequence>
<accession>Q0TLF6</accession>
<reference key="1">
    <citation type="journal article" date="2006" name="Mol. Microbiol.">
        <title>Role of pathogenicity island-associated integrases in the genome plasticity of uropathogenic Escherichia coli strain 536.</title>
        <authorList>
            <person name="Hochhut B."/>
            <person name="Wilde C."/>
            <person name="Balling G."/>
            <person name="Middendorf B."/>
            <person name="Dobrindt U."/>
            <person name="Brzuszkiewicz E."/>
            <person name="Gottschalk G."/>
            <person name="Carniel E."/>
            <person name="Hacker J."/>
        </authorList>
    </citation>
    <scope>NUCLEOTIDE SEQUENCE [LARGE SCALE GENOMIC DNA]</scope>
    <source>
        <strain>536 / UPEC</strain>
    </source>
</reference>
<proteinExistence type="inferred from homology"/>
<dbReference type="EMBL" id="CP000247">
    <property type="protein sequence ID" value="ABG68225.1"/>
    <property type="molecule type" value="Genomic_DNA"/>
</dbReference>
<dbReference type="RefSeq" id="WP_001240896.1">
    <property type="nucleotide sequence ID" value="NC_008253.1"/>
</dbReference>
<dbReference type="SMR" id="Q0TLF6"/>
<dbReference type="GeneID" id="93777248"/>
<dbReference type="KEGG" id="ecp:ECP_0185"/>
<dbReference type="HOGENOM" id="CLU_007664_1_0_6"/>
<dbReference type="Proteomes" id="UP000009182">
    <property type="component" value="Chromosome"/>
</dbReference>
<dbReference type="GO" id="GO:1990063">
    <property type="term" value="C:Bam protein complex"/>
    <property type="evidence" value="ECO:0007669"/>
    <property type="project" value="TreeGrafter"/>
</dbReference>
<dbReference type="GO" id="GO:0043165">
    <property type="term" value="P:Gram-negative-bacterium-type cell outer membrane assembly"/>
    <property type="evidence" value="ECO:0007669"/>
    <property type="project" value="UniProtKB-UniRule"/>
</dbReference>
<dbReference type="GO" id="GO:0051205">
    <property type="term" value="P:protein insertion into membrane"/>
    <property type="evidence" value="ECO:0007669"/>
    <property type="project" value="UniProtKB-UniRule"/>
</dbReference>
<dbReference type="FunFam" id="2.40.160.50:FF:000001">
    <property type="entry name" value="Outer membrane protein assembly factor BamA"/>
    <property type="match status" value="1"/>
</dbReference>
<dbReference type="FunFam" id="3.10.20.310:FF:000001">
    <property type="entry name" value="Outer membrane protein assembly factor BamA"/>
    <property type="match status" value="1"/>
</dbReference>
<dbReference type="FunFam" id="3.10.20.310:FF:000002">
    <property type="entry name" value="Outer membrane protein assembly factor BamA"/>
    <property type="match status" value="1"/>
</dbReference>
<dbReference type="FunFam" id="3.10.20.310:FF:000003">
    <property type="entry name" value="Outer membrane protein assembly factor BamA"/>
    <property type="match status" value="1"/>
</dbReference>
<dbReference type="FunFam" id="3.10.20.310:FF:000004">
    <property type="entry name" value="Outer membrane protein assembly factor BamA"/>
    <property type="match status" value="1"/>
</dbReference>
<dbReference type="FunFam" id="3.10.20.310:FF:000005">
    <property type="entry name" value="Outer membrane protein assembly factor BamA"/>
    <property type="match status" value="1"/>
</dbReference>
<dbReference type="Gene3D" id="3.10.20.310">
    <property type="entry name" value="membrane protein fhac"/>
    <property type="match status" value="5"/>
</dbReference>
<dbReference type="Gene3D" id="2.40.160.50">
    <property type="entry name" value="membrane protein fhac: a member of the omp85/tpsb transporter family"/>
    <property type="match status" value="1"/>
</dbReference>
<dbReference type="HAMAP" id="MF_01430">
    <property type="entry name" value="OM_assembly_BamA"/>
    <property type="match status" value="1"/>
</dbReference>
<dbReference type="InterPro" id="IPR000184">
    <property type="entry name" value="Bac_surfAg_D15"/>
</dbReference>
<dbReference type="InterPro" id="IPR010827">
    <property type="entry name" value="BamA/TamA_POTRA"/>
</dbReference>
<dbReference type="InterPro" id="IPR039910">
    <property type="entry name" value="D15-like"/>
</dbReference>
<dbReference type="InterPro" id="IPR023707">
    <property type="entry name" value="OM_assembly_BamA"/>
</dbReference>
<dbReference type="InterPro" id="IPR034746">
    <property type="entry name" value="POTRA"/>
</dbReference>
<dbReference type="NCBIfam" id="TIGR03303">
    <property type="entry name" value="OM_YaeT"/>
    <property type="match status" value="1"/>
</dbReference>
<dbReference type="NCBIfam" id="NF008287">
    <property type="entry name" value="PRK11067.1"/>
    <property type="match status" value="1"/>
</dbReference>
<dbReference type="PANTHER" id="PTHR12815:SF23">
    <property type="entry name" value="OUTER MEMBRANE PROTEIN ASSEMBLY FACTOR BAMA"/>
    <property type="match status" value="1"/>
</dbReference>
<dbReference type="PANTHER" id="PTHR12815">
    <property type="entry name" value="SORTING AND ASSEMBLY MACHINERY SAMM50 PROTEIN FAMILY MEMBER"/>
    <property type="match status" value="1"/>
</dbReference>
<dbReference type="Pfam" id="PF01103">
    <property type="entry name" value="Omp85"/>
    <property type="match status" value="1"/>
</dbReference>
<dbReference type="Pfam" id="PF07244">
    <property type="entry name" value="POTRA"/>
    <property type="match status" value="4"/>
</dbReference>
<dbReference type="PIRSF" id="PIRSF006076">
    <property type="entry name" value="OM_assembly_OMP85"/>
    <property type="match status" value="1"/>
</dbReference>
<dbReference type="PROSITE" id="PS51779">
    <property type="entry name" value="POTRA"/>
    <property type="match status" value="5"/>
</dbReference>
<name>BAMA_ECOL5</name>
<keyword id="KW-0998">Cell outer membrane</keyword>
<keyword id="KW-0472">Membrane</keyword>
<keyword id="KW-0677">Repeat</keyword>
<keyword id="KW-0732">Signal</keyword>
<keyword id="KW-0812">Transmembrane</keyword>
<keyword id="KW-1134">Transmembrane beta strand</keyword>
<protein>
    <recommendedName>
        <fullName evidence="1">Outer membrane protein assembly factor BamA</fullName>
    </recommendedName>
</protein>